<dbReference type="EC" id="3.4.11.1"/>
<dbReference type="EC" id="3.4.11.10"/>
<dbReference type="EMBL" id="AE002160">
    <property type="protein sequence ID" value="AAF39180.1"/>
    <property type="molecule type" value="Genomic_DNA"/>
</dbReference>
<dbReference type="EMBL" id="M86605">
    <property type="protein sequence ID" value="AAA73194.1"/>
    <property type="molecule type" value="Genomic_DNA"/>
</dbReference>
<dbReference type="PIR" id="F81715">
    <property type="entry name" value="F81715"/>
</dbReference>
<dbReference type="RefSeq" id="WP_010230133.1">
    <property type="nucleotide sequence ID" value="NZ_CP063055.1"/>
</dbReference>
<dbReference type="SMR" id="P38019"/>
<dbReference type="GeneID" id="1246358"/>
<dbReference type="KEGG" id="cmu:TC_0315"/>
<dbReference type="eggNOG" id="COG0260">
    <property type="taxonomic scope" value="Bacteria"/>
</dbReference>
<dbReference type="HOGENOM" id="CLU_013734_2_2_0"/>
<dbReference type="OrthoDB" id="9809354at2"/>
<dbReference type="Proteomes" id="UP000000800">
    <property type="component" value="Chromosome"/>
</dbReference>
<dbReference type="GO" id="GO:0005737">
    <property type="term" value="C:cytoplasm"/>
    <property type="evidence" value="ECO:0007669"/>
    <property type="project" value="UniProtKB-SubCell"/>
</dbReference>
<dbReference type="GO" id="GO:0030145">
    <property type="term" value="F:manganese ion binding"/>
    <property type="evidence" value="ECO:0007669"/>
    <property type="project" value="UniProtKB-UniRule"/>
</dbReference>
<dbReference type="GO" id="GO:0070006">
    <property type="term" value="F:metalloaminopeptidase activity"/>
    <property type="evidence" value="ECO:0007669"/>
    <property type="project" value="InterPro"/>
</dbReference>
<dbReference type="GO" id="GO:0006508">
    <property type="term" value="P:proteolysis"/>
    <property type="evidence" value="ECO:0007669"/>
    <property type="project" value="UniProtKB-KW"/>
</dbReference>
<dbReference type="CDD" id="cd00433">
    <property type="entry name" value="Peptidase_M17"/>
    <property type="match status" value="1"/>
</dbReference>
<dbReference type="Gene3D" id="3.40.220.10">
    <property type="entry name" value="Leucine Aminopeptidase, subunit E, domain 1"/>
    <property type="match status" value="1"/>
</dbReference>
<dbReference type="Gene3D" id="3.40.630.10">
    <property type="entry name" value="Zn peptidases"/>
    <property type="match status" value="1"/>
</dbReference>
<dbReference type="HAMAP" id="MF_00181">
    <property type="entry name" value="Cytosol_peptidase_M17"/>
    <property type="match status" value="1"/>
</dbReference>
<dbReference type="InterPro" id="IPR011356">
    <property type="entry name" value="Leucine_aapep/pepB"/>
</dbReference>
<dbReference type="InterPro" id="IPR043472">
    <property type="entry name" value="Macro_dom-like"/>
</dbReference>
<dbReference type="InterPro" id="IPR000819">
    <property type="entry name" value="Peptidase_M17_C"/>
</dbReference>
<dbReference type="InterPro" id="IPR023042">
    <property type="entry name" value="Peptidase_M17_leu_NH2_pept"/>
</dbReference>
<dbReference type="InterPro" id="IPR008283">
    <property type="entry name" value="Peptidase_M17_N"/>
</dbReference>
<dbReference type="NCBIfam" id="NF002074">
    <property type="entry name" value="PRK00913.1-4"/>
    <property type="match status" value="1"/>
</dbReference>
<dbReference type="NCBIfam" id="NF002078">
    <property type="entry name" value="PRK00913.2-5"/>
    <property type="match status" value="1"/>
</dbReference>
<dbReference type="NCBIfam" id="NF002083">
    <property type="entry name" value="PRK00913.3-5"/>
    <property type="match status" value="1"/>
</dbReference>
<dbReference type="PANTHER" id="PTHR11963:SF23">
    <property type="entry name" value="CYTOSOL AMINOPEPTIDASE"/>
    <property type="match status" value="1"/>
</dbReference>
<dbReference type="PANTHER" id="PTHR11963">
    <property type="entry name" value="LEUCINE AMINOPEPTIDASE-RELATED"/>
    <property type="match status" value="1"/>
</dbReference>
<dbReference type="Pfam" id="PF00883">
    <property type="entry name" value="Peptidase_M17"/>
    <property type="match status" value="1"/>
</dbReference>
<dbReference type="Pfam" id="PF02789">
    <property type="entry name" value="Peptidase_M17_N"/>
    <property type="match status" value="1"/>
</dbReference>
<dbReference type="PRINTS" id="PR00481">
    <property type="entry name" value="LAMNOPPTDASE"/>
</dbReference>
<dbReference type="SUPFAM" id="SSF52949">
    <property type="entry name" value="Macro domain-like"/>
    <property type="match status" value="1"/>
</dbReference>
<dbReference type="SUPFAM" id="SSF53187">
    <property type="entry name" value="Zn-dependent exopeptidases"/>
    <property type="match status" value="1"/>
</dbReference>
<dbReference type="PROSITE" id="PS00631">
    <property type="entry name" value="CYTOSOL_AP"/>
    <property type="match status" value="1"/>
</dbReference>
<reference key="1">
    <citation type="journal article" date="2000" name="Nucleic Acids Res.">
        <title>Genome sequences of Chlamydia trachomatis MoPn and Chlamydia pneumoniae AR39.</title>
        <authorList>
            <person name="Read T.D."/>
            <person name="Brunham R.C."/>
            <person name="Shen C."/>
            <person name="Gill S.R."/>
            <person name="Heidelberg J.F."/>
            <person name="White O."/>
            <person name="Hickey E.K."/>
            <person name="Peterson J.D."/>
            <person name="Utterback T.R."/>
            <person name="Berry K.J."/>
            <person name="Bass S."/>
            <person name="Linher K.D."/>
            <person name="Weidman J.F."/>
            <person name="Khouri H.M."/>
            <person name="Craven B."/>
            <person name="Bowman C."/>
            <person name="Dodson R.J."/>
            <person name="Gwinn M.L."/>
            <person name="Nelson W.C."/>
            <person name="DeBoy R.T."/>
            <person name="Kolonay J.F."/>
            <person name="McClarty G."/>
            <person name="Salzberg S.L."/>
            <person name="Eisen J.A."/>
            <person name="Fraser C.M."/>
        </authorList>
    </citation>
    <scope>NUCLEOTIDE SEQUENCE [LARGE SCALE GENOMIC DNA]</scope>
    <source>
        <strain>MoPn / Nigg</strain>
    </source>
</reference>
<reference key="2">
    <citation type="journal article" date="1992" name="Proc. Natl. Acad. Sci. U.S.A.">
        <title>A developmentally regulated chlamydial gene with apparent homology to eukaryotic histone H1.</title>
        <authorList>
            <person name="Perara E."/>
            <person name="Ganem D."/>
            <person name="Engel J.N."/>
        </authorList>
    </citation>
    <scope>NUCLEOTIDE SEQUENCE [GENOMIC DNA] OF 378-499</scope>
    <source>
        <strain>MoPn</strain>
    </source>
</reference>
<proteinExistence type="inferred from homology"/>
<feature type="chain" id="PRO_0000165738" description="Probable cytosol aminopeptidase">
    <location>
        <begin position="1"/>
        <end position="499"/>
    </location>
</feature>
<feature type="active site" evidence="2">
    <location>
        <position position="275"/>
    </location>
</feature>
<feature type="active site" evidence="2">
    <location>
        <position position="349"/>
    </location>
</feature>
<feature type="binding site" evidence="1">
    <location>
        <position position="263"/>
    </location>
    <ligand>
        <name>Mn(2+)</name>
        <dbReference type="ChEBI" id="CHEBI:29035"/>
        <label>2</label>
    </ligand>
</feature>
<feature type="binding site" evidence="1">
    <location>
        <position position="268"/>
    </location>
    <ligand>
        <name>Mn(2+)</name>
        <dbReference type="ChEBI" id="CHEBI:29035"/>
        <label>1</label>
    </ligand>
</feature>
<feature type="binding site" evidence="1">
    <location>
        <position position="268"/>
    </location>
    <ligand>
        <name>Mn(2+)</name>
        <dbReference type="ChEBI" id="CHEBI:29035"/>
        <label>2</label>
    </ligand>
</feature>
<feature type="binding site" evidence="1">
    <location>
        <position position="286"/>
    </location>
    <ligand>
        <name>Mn(2+)</name>
        <dbReference type="ChEBI" id="CHEBI:29035"/>
        <label>2</label>
    </ligand>
</feature>
<feature type="binding site" evidence="1">
    <location>
        <position position="345"/>
    </location>
    <ligand>
        <name>Mn(2+)</name>
        <dbReference type="ChEBI" id="CHEBI:29035"/>
        <label>1</label>
    </ligand>
</feature>
<feature type="binding site" evidence="1">
    <location>
        <position position="347"/>
    </location>
    <ligand>
        <name>Mn(2+)</name>
        <dbReference type="ChEBI" id="CHEBI:29035"/>
        <label>1</label>
    </ligand>
</feature>
<feature type="binding site" evidence="1">
    <location>
        <position position="347"/>
    </location>
    <ligand>
        <name>Mn(2+)</name>
        <dbReference type="ChEBI" id="CHEBI:29035"/>
        <label>2</label>
    </ligand>
</feature>
<sequence length="499" mass="54109">MVLLYSQASWDKRSKADALVLPFWMKNVKAQEAAVVDEDYKLVYQNALQNFSGKKGEAVFLFGNDKTKEQKIVLLGLGKSEEVSGTAILDAYAHVTTVLRKAKCKTVNILLPTISQLRFSVEEFLTNLAAGVLSLNYNYPTYHKVDASLPLLEKVTVLGIVPKVGDKIFRKEESLFEGVYLTRDLVNTNADEVTPEKLAAVAKGLAGEFASLDVKILDRKAILKEKMGLLAAVAKGSAVEPRFIVLDYQGKPKSKDRTVLIGKGVTFDSGGLDLKPGKAMITMKEDMAGAATVLGIFSALASLELPINVTGIIPATENAIGSAAYKMGDVYVGMSGLSVEIGSTDAEGRLILADAITYALKYCAPTRIIDFATLTGAMVVSLGEAVAGFFANNDVLARDLAEAASETGEALWRMPLVEKYDRALHSDIADMKNIGSNRAGSITAALFLQRFLEDNPVAWAHLDIAGTAYHEKEELPYPKYATGFGVRCLIYYMNKFLSK</sequence>
<accession>P38019</accession>
<comment type="function">
    <text evidence="1">Presumably involved in the processing and regular turnover of intracellular proteins. Catalyzes the removal of unsubstituted N-terminal amino acids from various peptides (By similarity).</text>
</comment>
<comment type="catalytic activity">
    <reaction>
        <text>Release of an N-terminal amino acid, Xaa-|-Yaa-, in which Xaa is preferably Leu, but may be other amino acids including Pro although not Arg or Lys, and Yaa may be Pro. Amino acid amides and methyl esters are also readily hydrolyzed, but rates on arylamides are exceedingly low.</text>
        <dbReference type="EC" id="3.4.11.1"/>
    </reaction>
</comment>
<comment type="catalytic activity">
    <reaction>
        <text>Release of an N-terminal amino acid, preferentially leucine, but not glutamic or aspartic acids.</text>
        <dbReference type="EC" id="3.4.11.10"/>
    </reaction>
</comment>
<comment type="cofactor">
    <cofactor evidence="1">
        <name>Mn(2+)</name>
        <dbReference type="ChEBI" id="CHEBI:29035"/>
    </cofactor>
    <text evidence="1">Binds 2 manganese ions per subunit.</text>
</comment>
<comment type="subcellular location">
    <subcellularLocation>
        <location evidence="1">Cytoplasm</location>
    </subcellularLocation>
</comment>
<comment type="similarity">
    <text evidence="3">Belongs to the peptidase M17 family.</text>
</comment>
<name>AMPA_CHLMU</name>
<keyword id="KW-0031">Aminopeptidase</keyword>
<keyword id="KW-0963">Cytoplasm</keyword>
<keyword id="KW-0378">Hydrolase</keyword>
<keyword id="KW-0464">Manganese</keyword>
<keyword id="KW-0479">Metal-binding</keyword>
<keyword id="KW-0645">Protease</keyword>
<gene>
    <name type="primary">pepA</name>
    <name type="ordered locus">TC_0315</name>
</gene>
<protein>
    <recommendedName>
        <fullName>Probable cytosol aminopeptidase</fullName>
        <ecNumber>3.4.11.1</ecNumber>
    </recommendedName>
    <alternativeName>
        <fullName>Leucine aminopeptidase</fullName>
        <shortName>LAP</shortName>
        <ecNumber>3.4.11.10</ecNumber>
    </alternativeName>
    <alternativeName>
        <fullName>Leucyl aminopeptidase</fullName>
    </alternativeName>
</protein>
<organism>
    <name type="scientific">Chlamydia muridarum (strain MoPn / Nigg)</name>
    <dbReference type="NCBI Taxonomy" id="243161"/>
    <lineage>
        <taxon>Bacteria</taxon>
        <taxon>Pseudomonadati</taxon>
        <taxon>Chlamydiota</taxon>
        <taxon>Chlamydiia</taxon>
        <taxon>Chlamydiales</taxon>
        <taxon>Chlamydiaceae</taxon>
        <taxon>Chlamydia/Chlamydophila group</taxon>
        <taxon>Chlamydia</taxon>
    </lineage>
</organism>
<evidence type="ECO:0000250" key="1"/>
<evidence type="ECO:0000255" key="2"/>
<evidence type="ECO:0000305" key="3"/>